<dbReference type="EMBL" id="DS499598">
    <property type="protein sequence ID" value="EDP50141.1"/>
    <property type="molecule type" value="Genomic_DNA"/>
</dbReference>
<dbReference type="SMR" id="B0Y5V6"/>
<dbReference type="EnsemblFungi" id="EDP50141">
    <property type="protein sequence ID" value="EDP50141"/>
    <property type="gene ID" value="AFUB_064720"/>
</dbReference>
<dbReference type="VEuPathDB" id="FungiDB:AFUB_064720"/>
<dbReference type="HOGENOM" id="CLU_000288_57_0_1"/>
<dbReference type="OrthoDB" id="109045at5052"/>
<dbReference type="PhylomeDB" id="B0Y5V6"/>
<dbReference type="Proteomes" id="UP000001699">
    <property type="component" value="Unassembled WGS sequence"/>
</dbReference>
<dbReference type="GO" id="GO:0005654">
    <property type="term" value="C:nucleoplasm"/>
    <property type="evidence" value="ECO:0007669"/>
    <property type="project" value="UniProtKB-SubCell"/>
</dbReference>
<dbReference type="GO" id="GO:0070545">
    <property type="term" value="C:PeBoW complex"/>
    <property type="evidence" value="ECO:0007669"/>
    <property type="project" value="EnsemblFungi"/>
</dbReference>
<dbReference type="GO" id="GO:0030687">
    <property type="term" value="C:preribosome, large subunit precursor"/>
    <property type="evidence" value="ECO:0007669"/>
    <property type="project" value="UniProtKB-UniRule"/>
</dbReference>
<dbReference type="GO" id="GO:0043021">
    <property type="term" value="F:ribonucleoprotein complex binding"/>
    <property type="evidence" value="ECO:0007669"/>
    <property type="project" value="UniProtKB-UniRule"/>
</dbReference>
<dbReference type="GO" id="GO:0051276">
    <property type="term" value="P:chromosome organization"/>
    <property type="evidence" value="ECO:0007669"/>
    <property type="project" value="EnsemblFungi"/>
</dbReference>
<dbReference type="GO" id="GO:0000466">
    <property type="term" value="P:maturation of 5.8S rRNA from tricistronic rRNA transcript (SSU-rRNA, 5.8S rRNA, LSU-rRNA)"/>
    <property type="evidence" value="ECO:0007669"/>
    <property type="project" value="UniProtKB-UniRule"/>
</dbReference>
<dbReference type="GO" id="GO:0000463">
    <property type="term" value="P:maturation of LSU-rRNA from tricistronic rRNA transcript (SSU-rRNA, 5.8S rRNA, LSU-rRNA)"/>
    <property type="evidence" value="ECO:0007669"/>
    <property type="project" value="UniProtKB-UniRule"/>
</dbReference>
<dbReference type="GO" id="GO:0110136">
    <property type="term" value="P:protein-RNA complex remodeling"/>
    <property type="evidence" value="ECO:0007669"/>
    <property type="project" value="EnsemblFungi"/>
</dbReference>
<dbReference type="FunFam" id="2.130.10.10:FF:000593">
    <property type="entry name" value="Ribosome biogenesis protein ytm1"/>
    <property type="match status" value="1"/>
</dbReference>
<dbReference type="Gene3D" id="2.130.10.10">
    <property type="entry name" value="YVTN repeat-like/Quinoprotein amine dehydrogenase"/>
    <property type="match status" value="1"/>
</dbReference>
<dbReference type="HAMAP" id="MF_03029">
    <property type="entry name" value="WDR12"/>
    <property type="match status" value="1"/>
</dbReference>
<dbReference type="InterPro" id="IPR020472">
    <property type="entry name" value="G-protein_beta_WD-40_rep"/>
</dbReference>
<dbReference type="InterPro" id="IPR012972">
    <property type="entry name" value="NLE"/>
</dbReference>
<dbReference type="InterPro" id="IPR015943">
    <property type="entry name" value="WD40/YVTN_repeat-like_dom_sf"/>
</dbReference>
<dbReference type="InterPro" id="IPR019775">
    <property type="entry name" value="WD40_repeat_CS"/>
</dbReference>
<dbReference type="InterPro" id="IPR036322">
    <property type="entry name" value="WD40_repeat_dom_sf"/>
</dbReference>
<dbReference type="InterPro" id="IPR001680">
    <property type="entry name" value="WD40_rpt"/>
</dbReference>
<dbReference type="InterPro" id="IPR028599">
    <property type="entry name" value="WDR12/Ytm1"/>
</dbReference>
<dbReference type="PANTHER" id="PTHR19855:SF11">
    <property type="entry name" value="RIBOSOME BIOGENESIS PROTEIN WDR12"/>
    <property type="match status" value="1"/>
</dbReference>
<dbReference type="PANTHER" id="PTHR19855">
    <property type="entry name" value="WD40 REPEAT PROTEIN 12, 37"/>
    <property type="match status" value="1"/>
</dbReference>
<dbReference type="Pfam" id="PF08154">
    <property type="entry name" value="NLE"/>
    <property type="match status" value="1"/>
</dbReference>
<dbReference type="Pfam" id="PF00400">
    <property type="entry name" value="WD40"/>
    <property type="match status" value="5"/>
</dbReference>
<dbReference type="PRINTS" id="PR00320">
    <property type="entry name" value="GPROTEINBRPT"/>
</dbReference>
<dbReference type="SMART" id="SM00320">
    <property type="entry name" value="WD40"/>
    <property type="match status" value="7"/>
</dbReference>
<dbReference type="SUPFAM" id="SSF50978">
    <property type="entry name" value="WD40 repeat-like"/>
    <property type="match status" value="1"/>
</dbReference>
<dbReference type="PROSITE" id="PS00678">
    <property type="entry name" value="WD_REPEATS_1"/>
    <property type="match status" value="2"/>
</dbReference>
<dbReference type="PROSITE" id="PS50082">
    <property type="entry name" value="WD_REPEATS_2"/>
    <property type="match status" value="5"/>
</dbReference>
<dbReference type="PROSITE" id="PS50294">
    <property type="entry name" value="WD_REPEATS_REGION"/>
    <property type="match status" value="1"/>
</dbReference>
<accession>B0Y5V6</accession>
<gene>
    <name type="primary">ytm1</name>
    <name type="ORF">AFUB_064720</name>
</gene>
<proteinExistence type="inferred from homology"/>
<keyword id="KW-0539">Nucleus</keyword>
<keyword id="KW-0677">Repeat</keyword>
<keyword id="KW-0690">Ribosome biogenesis</keyword>
<keyword id="KW-0698">rRNA processing</keyword>
<keyword id="KW-0853">WD repeat</keyword>
<comment type="function">
    <text evidence="1">Component of the NOP7 complex, which is required for maturation of the 25S and 5.8S ribosomal RNAs and formation of the 60S ribosome.</text>
</comment>
<comment type="subunit">
    <text evidence="1">Component of the NOP7 complex, composed of erb1, nop7 and ytm1. The complex is held together by erb1, which interacts with nop7 via its N-terminal domain and with ytm1 via a high-affinity interaction between the seven-bladed beta-propeller domains of the 2 proteins. The NOP7 complex associates with the 66S pre-ribosome. Interacts (via UBL domain) with mdn1 (via VWFA/MIDAS domain).</text>
</comment>
<comment type="subcellular location">
    <subcellularLocation>
        <location evidence="1">Nucleus</location>
        <location evidence="1">Nucleolus</location>
    </subcellularLocation>
    <subcellularLocation>
        <location evidence="1">Nucleus</location>
        <location evidence="1">Nucleoplasm</location>
    </subcellularLocation>
</comment>
<comment type="similarity">
    <text evidence="1">Belongs to the WD repeat WDR12/YTM1 family.</text>
</comment>
<reference key="1">
    <citation type="journal article" date="2008" name="PLoS Genet.">
        <title>Genomic islands in the pathogenic filamentous fungus Aspergillus fumigatus.</title>
        <authorList>
            <person name="Fedorova N.D."/>
            <person name="Khaldi N."/>
            <person name="Joardar V.S."/>
            <person name="Maiti R."/>
            <person name="Amedeo P."/>
            <person name="Anderson M.J."/>
            <person name="Crabtree J."/>
            <person name="Silva J.C."/>
            <person name="Badger J.H."/>
            <person name="Albarraq A."/>
            <person name="Angiuoli S."/>
            <person name="Bussey H."/>
            <person name="Bowyer P."/>
            <person name="Cotty P.J."/>
            <person name="Dyer P.S."/>
            <person name="Egan A."/>
            <person name="Galens K."/>
            <person name="Fraser-Liggett C.M."/>
            <person name="Haas B.J."/>
            <person name="Inman J.M."/>
            <person name="Kent R."/>
            <person name="Lemieux S."/>
            <person name="Malavazi I."/>
            <person name="Orvis J."/>
            <person name="Roemer T."/>
            <person name="Ronning C.M."/>
            <person name="Sundaram J.P."/>
            <person name="Sutton G."/>
            <person name="Turner G."/>
            <person name="Venter J.C."/>
            <person name="White O.R."/>
            <person name="Whitty B.R."/>
            <person name="Youngman P."/>
            <person name="Wolfe K.H."/>
            <person name="Goldman G.H."/>
            <person name="Wortman J.R."/>
            <person name="Jiang B."/>
            <person name="Denning D.W."/>
            <person name="Nierman W.C."/>
        </authorList>
    </citation>
    <scope>NUCLEOTIDE SEQUENCE [LARGE SCALE GENOMIC DNA]</scope>
    <source>
        <strain>CBS 144.89 / FGSC A1163 / CEA10</strain>
    </source>
</reference>
<feature type="chain" id="PRO_0000369575" description="Ribosome biogenesis protein ytm1">
    <location>
        <begin position="1"/>
        <end position="488"/>
    </location>
</feature>
<feature type="repeat" description="WD 1">
    <location>
        <begin position="128"/>
        <end position="167"/>
    </location>
</feature>
<feature type="repeat" description="WD 2">
    <location>
        <begin position="174"/>
        <end position="212"/>
    </location>
</feature>
<feature type="repeat" description="WD 3">
    <location>
        <begin position="223"/>
        <end position="262"/>
    </location>
</feature>
<feature type="repeat" description="WD 4">
    <location>
        <begin position="297"/>
        <end position="337"/>
    </location>
</feature>
<feature type="repeat" description="WD 5">
    <location>
        <begin position="339"/>
        <end position="378"/>
    </location>
</feature>
<feature type="repeat" description="WD 6">
    <location>
        <begin position="384"/>
        <end position="424"/>
    </location>
</feature>
<feature type="repeat" description="WD 7">
    <location>
        <begin position="452"/>
        <end position="488"/>
    </location>
</feature>
<feature type="region of interest" description="Ubiquitin-like (UBL) domain" evidence="1">
    <location>
        <begin position="20"/>
        <end position="101"/>
    </location>
</feature>
<feature type="region of interest" description="Disordered" evidence="2">
    <location>
        <begin position="257"/>
        <end position="285"/>
    </location>
</feature>
<feature type="compositionally biased region" description="Low complexity" evidence="2">
    <location>
        <begin position="259"/>
        <end position="273"/>
    </location>
</feature>
<organism>
    <name type="scientific">Aspergillus fumigatus (strain CBS 144.89 / FGSC A1163 / CEA10)</name>
    <name type="common">Neosartorya fumigata</name>
    <dbReference type="NCBI Taxonomy" id="451804"/>
    <lineage>
        <taxon>Eukaryota</taxon>
        <taxon>Fungi</taxon>
        <taxon>Dikarya</taxon>
        <taxon>Ascomycota</taxon>
        <taxon>Pezizomycotina</taxon>
        <taxon>Eurotiomycetes</taxon>
        <taxon>Eurotiomycetidae</taxon>
        <taxon>Eurotiales</taxon>
        <taxon>Aspergillaceae</taxon>
        <taxon>Aspergillus</taxon>
        <taxon>Aspergillus subgen. Fumigati</taxon>
    </lineage>
</organism>
<name>YTM1_ASPFC</name>
<evidence type="ECO:0000255" key="1">
    <source>
        <dbReference type="HAMAP-Rule" id="MF_03029"/>
    </source>
</evidence>
<evidence type="ECO:0000256" key="2">
    <source>
        <dbReference type="SAM" id="MobiDB-lite"/>
    </source>
</evidence>
<protein>
    <recommendedName>
        <fullName evidence="1">Ribosome biogenesis protein ytm1</fullName>
    </recommendedName>
</protein>
<sequence length="488" mass="51997">MNDGSNSDATATSSAAQRQVRVQLTSKQEDIALPDNTGPILVPTSLRRYALSTLVNKLLGNDKPIPFEFLINGTFLRTSIDEYLTANGISAETTLEIEYVRALIPPLHIASFQHDDWVSSTDVLSATSPAATWASATISQGQEKILSGSYDGLLRVWNMSSQIVATSPAAADGGHTASIKAAKFVTPNQIASAGLDRTVRLWKYAESDEGFSGTIAPQLELYGHKSGINSLAVHALSNRILSASSDNSVGFWSTKKSDAPAAPDDLLPSAASRSSKRRKLNSSVTVPQRGPLALLSSHTAPVSAAIFDAKDSTVGYSASWDHSMRTWDLVTSALVDTRTTSHSLLSLEHLPELNLLAAGTSARHITLIDPRASATTISAMTLRGHTNAVVSLARDPHSTYGLISGSHDGTCRIWDIRATKTDKDGAVGESVYSISRKSLEEQGRSDTKRVGGEGVKVFSVCWDKTVGIVSAGEDKRIQINRGEGVLSA</sequence>